<name>PVDB_PLAKN</name>
<comment type="function">
    <text evidence="4 5">Binds to Neu5Gc-sialylated receptors on macaque erythrocytes.</text>
</comment>
<comment type="subcellular location">
    <subcellularLocation>
        <location evidence="2">Membrane</location>
        <topology evidence="2">Single-pass type I membrane protein</topology>
    </subcellularLocation>
</comment>
<protein>
    <recommendedName>
        <fullName>Duffy receptor beta form</fullName>
    </recommendedName>
    <alternativeName>
        <fullName evidence="6">Erythrocyte-binding protein</fullName>
    </alternativeName>
</protein>
<proteinExistence type="inferred from homology"/>
<evidence type="ECO:0000250" key="1">
    <source>
        <dbReference type="UniProtKB" id="P22545"/>
    </source>
</evidence>
<evidence type="ECO:0000255" key="2"/>
<evidence type="ECO:0000256" key="3">
    <source>
        <dbReference type="SAM" id="MobiDB-lite"/>
    </source>
</evidence>
<evidence type="ECO:0000269" key="4">
    <source>
    </source>
</evidence>
<evidence type="ECO:0000269" key="5">
    <source>
    </source>
</evidence>
<evidence type="ECO:0000303" key="6">
    <source>
    </source>
</evidence>
<evidence type="ECO:0000305" key="7"/>
<reference key="1">
    <citation type="journal article" date="1992" name="Proc. Natl. Acad. Sci. U.S.A.">
        <title>A family of erythrocyte binding proteins of malaria parasites.</title>
        <authorList>
            <person name="Adams J.H."/>
            <person name="Sim B.K."/>
            <person name="Dolan S.A."/>
            <person name="Fang X."/>
            <person name="Kaslow D.C."/>
            <person name="Miller L.H."/>
        </authorList>
    </citation>
    <scope>NUCLEOTIDE SEQUENCE [GENOMIC DNA]</scope>
</reference>
<reference key="2">
    <citation type="journal article" date="1999" name="Proc. Natl. Acad. Sci. U.S.A.">
        <title>Mapping regions containing binding residues within functional domains of Plasmodium vivax and Plasmodium knowlesi erythrocyte-binding proteins.</title>
        <authorList>
            <person name="Ranjan A."/>
            <person name="Chitnis C.E."/>
        </authorList>
    </citation>
    <scope>FUNCTION</scope>
</reference>
<reference key="3">
    <citation type="journal article" date="2016" name="Nat. Commun.">
        <title>Ancient human sialic acid variant restricts an emerging zoonotic malaria parasite.</title>
        <authorList>
            <person name="Dankwa S."/>
            <person name="Lim C."/>
            <person name="Bei A.K."/>
            <person name="Jiang R.H."/>
            <person name="Abshire J.R."/>
            <person name="Patel S.D."/>
            <person name="Goldberg J.M."/>
            <person name="Moreno Y."/>
            <person name="Kono M."/>
            <person name="Niles J.C."/>
            <person name="Duraisingh M.T."/>
        </authorList>
    </citation>
    <scope>FUNCTION</scope>
</reference>
<feature type="signal peptide" evidence="2">
    <location>
        <begin position="1"/>
        <end position="21"/>
    </location>
</feature>
<feature type="chain" id="PRO_0000024619" description="Duffy receptor beta form">
    <location>
        <begin position="22"/>
        <end position="1153"/>
    </location>
</feature>
<feature type="topological domain" description="Extracellular" evidence="2">
    <location>
        <begin position="22"/>
        <end position="1085"/>
    </location>
</feature>
<feature type="transmembrane region" description="Helical" evidence="2">
    <location>
        <begin position="1086"/>
        <end position="1106"/>
    </location>
</feature>
<feature type="topological domain" description="Cytoplasmic" evidence="2">
    <location>
        <begin position="1107"/>
        <end position="1153"/>
    </location>
</feature>
<feature type="region of interest" description="Disordered" evidence="3">
    <location>
        <begin position="520"/>
        <end position="545"/>
    </location>
</feature>
<feature type="region of interest" description="Disordered" evidence="3">
    <location>
        <begin position="565"/>
        <end position="591"/>
    </location>
</feature>
<feature type="region of interest" description="Disordered" evidence="3">
    <location>
        <begin position="612"/>
        <end position="631"/>
    </location>
</feature>
<feature type="region of interest" description="Disordered" evidence="3">
    <location>
        <begin position="655"/>
        <end position="981"/>
    </location>
</feature>
<feature type="compositionally biased region" description="Polar residues" evidence="3">
    <location>
        <begin position="531"/>
        <end position="542"/>
    </location>
</feature>
<feature type="compositionally biased region" description="Polar residues" evidence="3">
    <location>
        <begin position="574"/>
        <end position="586"/>
    </location>
</feature>
<feature type="compositionally biased region" description="Basic and acidic residues" evidence="3">
    <location>
        <begin position="661"/>
        <end position="675"/>
    </location>
</feature>
<feature type="compositionally biased region" description="Polar residues" evidence="3">
    <location>
        <begin position="677"/>
        <end position="733"/>
    </location>
</feature>
<feature type="compositionally biased region" description="Basic and acidic residues" evidence="3">
    <location>
        <begin position="791"/>
        <end position="800"/>
    </location>
</feature>
<feature type="compositionally biased region" description="Polar residues" evidence="3">
    <location>
        <begin position="819"/>
        <end position="834"/>
    </location>
</feature>
<feature type="compositionally biased region" description="Basic and acidic residues" evidence="3">
    <location>
        <begin position="867"/>
        <end position="878"/>
    </location>
</feature>
<feature type="compositionally biased region" description="Low complexity" evidence="3">
    <location>
        <begin position="884"/>
        <end position="942"/>
    </location>
</feature>
<feature type="compositionally biased region" description="Basic and acidic residues" evidence="3">
    <location>
        <begin position="945"/>
        <end position="969"/>
    </location>
</feature>
<feature type="compositionally biased region" description="Polar residues" evidence="3">
    <location>
        <begin position="971"/>
        <end position="981"/>
    </location>
</feature>
<feature type="glycosylation site" description="N-linked (GlcNAc...) asparagine" evidence="2">
    <location>
        <position position="134"/>
    </location>
</feature>
<feature type="glycosylation site" description="N-linked (GlcNAc...) asparagine" evidence="2">
    <location>
        <position position="179"/>
    </location>
</feature>
<feature type="glycosylation site" description="N-linked (GlcNAc...) asparagine" evidence="2">
    <location>
        <position position="202"/>
    </location>
</feature>
<feature type="glycosylation site" description="N-linked (GlcNAc...) asparagine" evidence="2">
    <location>
        <position position="252"/>
    </location>
</feature>
<feature type="glycosylation site" description="N-linked (GlcNAc...) asparagine" evidence="2">
    <location>
        <position position="348"/>
    </location>
</feature>
<feature type="glycosylation site" description="N-linked (GlcNAc...) asparagine" evidence="2">
    <location>
        <position position="430"/>
    </location>
</feature>
<feature type="glycosylation site" description="N-linked (GlcNAc...) asparagine" evidence="2">
    <location>
        <position position="467"/>
    </location>
</feature>
<feature type="glycosylation site" description="N-linked (GlcNAc...) asparagine" evidence="2">
    <location>
        <position position="576"/>
    </location>
</feature>
<feature type="glycosylation site" description="N-linked (GlcNAc...) asparagine" evidence="2">
    <location>
        <position position="626"/>
    </location>
</feature>
<feature type="glycosylation site" description="N-linked (GlcNAc...) asparagine" evidence="2">
    <location>
        <position position="722"/>
    </location>
</feature>
<feature type="glycosylation site" description="N-linked (GlcNAc...) asparagine" evidence="2">
    <location>
        <position position="847"/>
    </location>
</feature>
<feature type="glycosylation site" description="N-linked (GlcNAc...) asparagine" evidence="2">
    <location>
        <position position="856"/>
    </location>
</feature>
<feature type="glycosylation site" description="N-linked (GlcNAc...) asparagine" evidence="2">
    <location>
        <position position="900"/>
    </location>
</feature>
<feature type="glycosylation site" description="N-linked (GlcNAc...) asparagine" evidence="2">
    <location>
        <position position="910"/>
    </location>
</feature>
<feature type="glycosylation site" description="N-linked (GlcNAc...) asparagine" evidence="2">
    <location>
        <position position="935"/>
    </location>
</feature>
<feature type="disulfide bond" evidence="1">
    <location>
        <begin position="214"/>
        <end position="243"/>
    </location>
</feature>
<feature type="disulfide bond" evidence="1">
    <location>
        <begin position="227"/>
        <end position="234"/>
    </location>
</feature>
<feature type="disulfide bond" evidence="1">
    <location>
        <begin position="297"/>
        <end position="374"/>
    </location>
</feature>
<feature type="disulfide bond" evidence="1">
    <location>
        <begin position="412"/>
        <end position="429"/>
    </location>
</feature>
<feature type="disulfide bond" evidence="1">
    <location>
        <begin position="424"/>
        <end position="504"/>
    </location>
</feature>
<feature type="disulfide bond" evidence="1">
    <location>
        <begin position="433"/>
        <end position="502"/>
    </location>
</feature>
<sequence length="1153" mass="130472">MEGKKKRPLFFLLVLLLSHKANNVLFERMKGILLLECENEYVKNENGYKLATGHHYMDNDQIERWLQGTDRSRRVKIEENVKYKYNVEELNTKYEQTKGKRINRILKESTYEAQNVADNNYIDDKANGEYKTDNKTNKGEGARNMVMLDYDISGSGHPDGIIDNVVELGTEDEGNFLENSSKGGDHPYRMNRKERMCSGVINQTFLQKNVMRRCNNKRKRGTRDWDCPTKKDVCIPDRRYQLCMKELTNLVNNTKTHSHNDITFLKLNLKEKLTYDAAVEGDLLLKKYNNVYSEDLCKDIKWSLEDFGDIIMGTDMEGIGYSQVVENNLRTVFGTGTKTQLDRKKWWNESKKYIWEATILSVKKKLNGYSAWNCKEDVQINVEPQIYRWIREWGMDYMSELPKEQRKIKEKCDRKLYYTNLRICTMSPCNDSCKLYDQWITRKKKQWDVLSTKFSSVKKGQIIETENITTAYDILKQELNGFNEVMFENEINKRDNVYIDICLCAADEPNKNTQEHLKKLKSAPKLETQRSHSTIQPMSSSGAEKVQGDLAHGNINDAAYKSTTDEAAKGDGQNGNQTVAESNIKGTDNIENEAAKNVDTYKFVTERSADTRGATDITETGEEKLNTSYSGSSEITVKENIPGDGIVKDVSAAVENSENPLETKHKIFEPSKDNSDNSENSGSMEFKATSSNPITEAVESSSAEGQVQEDSAHRSVNTGRDNSTISAATSDDGLSSGDKRVESLTSIENADDGGDPVQGSLWNLLNDPSVGAGGGKSHIKTEENEGSQAEIDGKNVDIAEQRTATITEVQPERPDLSDTDNGNVPRSGNKQNEGATALSGAESLESNESVHKTIDNTTHGLENKNGGNEKDFQKHDFMNNDMLNDQTSSDQTSSDQTSSNQTSSDQTSSNQTSSDQTSSDQISSDQTSSDQTSSNQTSSDQTIDTEEHHRDNVRNPEIKSSEDMSKGDFMRNSNSNELYSHNNLNNRKLNIDQYEHRDVKATREKIILMSEVNKCNNRASLKYCNTIEDRMLSSTCSRERSKNLCCSISDFCLNYFELYPYEFYNCMKKEFEDSSYECFTKGSSTGIGIVYFATGGAFLIILLLFVSKNVASNDYEEEATFDEFVEYSDDIHRTPLMPNHIEHMQQFTPLDYS</sequence>
<gene>
    <name evidence="7" type="primary">DBPbeta</name>
</gene>
<keyword id="KW-1015">Disulfide bond</keyword>
<keyword id="KW-0325">Glycoprotein</keyword>
<keyword id="KW-0461">Malaria</keyword>
<keyword id="KW-0472">Membrane</keyword>
<keyword id="KW-0675">Receptor</keyword>
<keyword id="KW-0732">Signal</keyword>
<keyword id="KW-0812">Transmembrane</keyword>
<keyword id="KW-1133">Transmembrane helix</keyword>
<organism>
    <name type="scientific">Plasmodium knowlesi</name>
    <dbReference type="NCBI Taxonomy" id="5850"/>
    <lineage>
        <taxon>Eukaryota</taxon>
        <taxon>Sar</taxon>
        <taxon>Alveolata</taxon>
        <taxon>Apicomplexa</taxon>
        <taxon>Aconoidasida</taxon>
        <taxon>Haemosporida</taxon>
        <taxon>Plasmodiidae</taxon>
        <taxon>Plasmodium</taxon>
        <taxon>Plasmodium (Plasmodium)</taxon>
    </lineage>
</organism>
<accession>P50493</accession>
<dbReference type="EMBL" id="M90694">
    <property type="protein sequence ID" value="AAA29603.1"/>
    <property type="molecule type" value="Genomic_DNA"/>
</dbReference>
<dbReference type="PIR" id="T28652">
    <property type="entry name" value="T28652"/>
</dbReference>
<dbReference type="SMR" id="P50493"/>
<dbReference type="VEuPathDB" id="PlasmoDB:PKA1H_140005700"/>
<dbReference type="VEuPathDB" id="PlasmoDB:PKNH_1400800"/>
<dbReference type="VEuPathDB" id="PlasmoDB:PKNOH_S140217900"/>
<dbReference type="GO" id="GO:0016020">
    <property type="term" value="C:membrane"/>
    <property type="evidence" value="ECO:0007669"/>
    <property type="project" value="UniProtKB-SubCell"/>
</dbReference>
<dbReference type="GO" id="GO:0046789">
    <property type="term" value="F:host cell surface receptor binding"/>
    <property type="evidence" value="ECO:0007669"/>
    <property type="project" value="InterPro"/>
</dbReference>
<dbReference type="Gene3D" id="1.20.58.830">
    <property type="match status" value="1"/>
</dbReference>
<dbReference type="Gene3D" id="1.20.1310.20">
    <property type="entry name" value="Duffy-antigen binding domain"/>
    <property type="match status" value="1"/>
</dbReference>
<dbReference type="Gene3D" id="1.10.1740.170">
    <property type="entry name" value="Erythrocyte binding antigen 175 region VI"/>
    <property type="match status" value="1"/>
</dbReference>
<dbReference type="InterPro" id="IPR042202">
    <property type="entry name" value="Duffy-ag-bd_sf"/>
</dbReference>
<dbReference type="InterPro" id="IPR008602">
    <property type="entry name" value="Duffy-antigen-binding"/>
</dbReference>
<dbReference type="InterPro" id="IPR021015">
    <property type="entry name" value="Duffy-antigen-binding_C"/>
</dbReference>
<dbReference type="InterPro" id="IPR021032">
    <property type="entry name" value="Duffy-antigen-binding_N"/>
</dbReference>
<dbReference type="InterPro" id="IPR021620">
    <property type="entry name" value="EBA-175_C"/>
</dbReference>
<dbReference type="InterPro" id="IPR043057">
    <property type="entry name" value="EBA-175_C_sf"/>
</dbReference>
<dbReference type="Pfam" id="PF12361">
    <property type="entry name" value="DBP"/>
    <property type="match status" value="2"/>
</dbReference>
<dbReference type="Pfam" id="PF05424">
    <property type="entry name" value="Duffy_binding"/>
    <property type="match status" value="1"/>
</dbReference>
<dbReference type="Pfam" id="PF12377">
    <property type="entry name" value="DuffyBP_N"/>
    <property type="match status" value="1"/>
</dbReference>
<dbReference type="Pfam" id="PF11556">
    <property type="entry name" value="EBA-175_VI"/>
    <property type="match status" value="1"/>
</dbReference>
<dbReference type="SUPFAM" id="SSF140924">
    <property type="entry name" value="Duffy binding domain-like"/>
    <property type="match status" value="1"/>
</dbReference>